<comment type="function">
    <text evidence="3">Hydrolyzes 2-acetyl monoalkylglycerol ether (1-O-alkyl-2-acetyl-sn-glycerol), the penultimate precursor of the pathway for de novo synthesis of platelet-activating factor (By similarity). May be responsible for the hydrolysis of cholesterol esters (such as cholesteryl (9Z-octadecenoate)) in macrophages (By similarity). Also involved in organ detoxification by hydrolyzing exogenous organophosphorus compounds (By similarity).</text>
</comment>
<comment type="catalytic activity">
    <reaction evidence="2">
        <text>a 1-O-alkyl-2-acetyl-sn-glycerol + H2O = a 1-O-alkyl-sn-glycerol + acetate + H(+)</text>
        <dbReference type="Rhea" id="RHEA:11552"/>
        <dbReference type="ChEBI" id="CHEBI:15377"/>
        <dbReference type="ChEBI" id="CHEBI:15378"/>
        <dbReference type="ChEBI" id="CHEBI:15850"/>
        <dbReference type="ChEBI" id="CHEBI:16291"/>
        <dbReference type="ChEBI" id="CHEBI:30089"/>
        <dbReference type="EC" id="3.1.1.71"/>
    </reaction>
    <physiologicalReaction direction="left-to-right" evidence="2">
        <dbReference type="Rhea" id="RHEA:11553"/>
    </physiologicalReaction>
</comment>
<comment type="catalytic activity">
    <reaction evidence="3">
        <text>1-O-hexadecyl-2-acetyl-sn-glycerol + H2O = 1-O-hexadecyl-sn-glycerol + acetate + H(+)</text>
        <dbReference type="Rhea" id="RHEA:38563"/>
        <dbReference type="ChEBI" id="CHEBI:15377"/>
        <dbReference type="ChEBI" id="CHEBI:15378"/>
        <dbReference type="ChEBI" id="CHEBI:30089"/>
        <dbReference type="ChEBI" id="CHEBI:34115"/>
        <dbReference type="ChEBI" id="CHEBI:75936"/>
    </reaction>
    <physiologicalReaction direction="left-to-right" evidence="3">
        <dbReference type="Rhea" id="RHEA:38564"/>
    </physiologicalReaction>
</comment>
<comment type="catalytic activity">
    <reaction evidence="3">
        <text>a cholesterol ester + H2O = cholesterol + a fatty acid + H(+)</text>
        <dbReference type="Rhea" id="RHEA:36403"/>
        <dbReference type="ChEBI" id="CHEBI:15377"/>
        <dbReference type="ChEBI" id="CHEBI:15378"/>
        <dbReference type="ChEBI" id="CHEBI:16113"/>
        <dbReference type="ChEBI" id="CHEBI:17002"/>
        <dbReference type="ChEBI" id="CHEBI:28868"/>
    </reaction>
    <physiologicalReaction direction="left-to-right" evidence="3">
        <dbReference type="Rhea" id="RHEA:36404"/>
    </physiologicalReaction>
</comment>
<comment type="catalytic activity">
    <reaction evidence="3">
        <text>cholesteryl (9Z-octadecenoate) + H2O = cholesterol + (9Z)-octadecenoate + H(+)</text>
        <dbReference type="Rhea" id="RHEA:33875"/>
        <dbReference type="ChEBI" id="CHEBI:15377"/>
        <dbReference type="ChEBI" id="CHEBI:15378"/>
        <dbReference type="ChEBI" id="CHEBI:16113"/>
        <dbReference type="ChEBI" id="CHEBI:30823"/>
        <dbReference type="ChEBI" id="CHEBI:46898"/>
    </reaction>
    <physiologicalReaction direction="left-to-right" evidence="3">
        <dbReference type="Rhea" id="RHEA:33876"/>
    </physiologicalReaction>
</comment>
<comment type="subcellular location">
    <subcellularLocation>
        <location evidence="2">Cell membrane</location>
        <topology evidence="2">Single-pass type II membrane protein</topology>
    </subcellularLocation>
    <subcellularLocation>
        <location evidence="3">Microsome</location>
    </subcellularLocation>
</comment>
<comment type="PTM">
    <text evidence="2">N-glycosylated.</text>
</comment>
<comment type="similarity">
    <text evidence="6">Belongs to the 'GDXG' lipolytic enzyme family.</text>
</comment>
<evidence type="ECO:0000250" key="1">
    <source>
        <dbReference type="UniProtKB" id="Q5NUF3"/>
    </source>
</evidence>
<evidence type="ECO:0000250" key="2">
    <source>
        <dbReference type="UniProtKB" id="Q6PIU2"/>
    </source>
</evidence>
<evidence type="ECO:0000250" key="3">
    <source>
        <dbReference type="UniProtKB" id="Q8BLF1"/>
    </source>
</evidence>
<evidence type="ECO:0000255" key="4"/>
<evidence type="ECO:0000255" key="5">
    <source>
        <dbReference type="PROSITE-ProRule" id="PRU10038"/>
    </source>
</evidence>
<evidence type="ECO:0000305" key="6"/>
<proteinExistence type="evidence at transcript level"/>
<dbReference type="EC" id="3.1.1.-" evidence="3"/>
<dbReference type="EC" id="3.1.1.71" evidence="3"/>
<dbReference type="EMBL" id="BC115993">
    <property type="protein sequence ID" value="AAI15994.2"/>
    <property type="molecule type" value="mRNA"/>
</dbReference>
<dbReference type="RefSeq" id="NP_001116506.1">
    <property type="nucleotide sequence ID" value="NM_001123034.1"/>
</dbReference>
<dbReference type="SMR" id="Q1JQE6"/>
<dbReference type="FunCoup" id="Q1JQE6">
    <property type="interactions" value="368"/>
</dbReference>
<dbReference type="STRING" id="9913.ENSBTAP00000026745"/>
<dbReference type="ESTHER" id="bovin-nceh1">
    <property type="family name" value="Arylacetamide_deacetylase"/>
</dbReference>
<dbReference type="GlyCosmos" id="Q1JQE6">
    <property type="glycosylation" value="3 sites, No reported glycans"/>
</dbReference>
<dbReference type="GlyGen" id="Q1JQE6">
    <property type="glycosylation" value="3 sites"/>
</dbReference>
<dbReference type="PaxDb" id="9913-ENSBTAP00000026745"/>
<dbReference type="Ensembl" id="ENSBTAT00000026745.5">
    <property type="protein sequence ID" value="ENSBTAP00000026745.3"/>
    <property type="gene ID" value="ENSBTAG00000020073.5"/>
</dbReference>
<dbReference type="GeneID" id="534212"/>
<dbReference type="KEGG" id="bta:534212"/>
<dbReference type="CTD" id="57552"/>
<dbReference type="VEuPathDB" id="HostDB:ENSBTAG00000020073"/>
<dbReference type="VGNC" id="VGNC:31911">
    <property type="gene designation" value="NCEH1"/>
</dbReference>
<dbReference type="eggNOG" id="KOG1515">
    <property type="taxonomic scope" value="Eukaryota"/>
</dbReference>
<dbReference type="GeneTree" id="ENSGT00940000156699"/>
<dbReference type="HOGENOM" id="CLU_012494_12_0_1"/>
<dbReference type="InParanoid" id="Q1JQE6"/>
<dbReference type="OMA" id="FHGCMAF"/>
<dbReference type="OrthoDB" id="408631at2759"/>
<dbReference type="TreeFam" id="TF314978"/>
<dbReference type="Reactome" id="R-BTA-8964038">
    <property type="pathway name" value="LDL clearance"/>
</dbReference>
<dbReference type="Proteomes" id="UP000009136">
    <property type="component" value="Chromosome 1"/>
</dbReference>
<dbReference type="Bgee" id="ENSBTAG00000020073">
    <property type="expression patterns" value="Expressed in thymus and 99 other cell types or tissues"/>
</dbReference>
<dbReference type="GO" id="GO:0005783">
    <property type="term" value="C:endoplasmic reticulum"/>
    <property type="evidence" value="ECO:0007669"/>
    <property type="project" value="UniProtKB-KW"/>
</dbReference>
<dbReference type="GO" id="GO:0005886">
    <property type="term" value="C:plasma membrane"/>
    <property type="evidence" value="ECO:0007669"/>
    <property type="project" value="UniProtKB-SubCell"/>
</dbReference>
<dbReference type="GO" id="GO:0047378">
    <property type="term" value="F:acetylalkylglycerol acetylhydrolase activity"/>
    <property type="evidence" value="ECO:0007669"/>
    <property type="project" value="RHEA"/>
</dbReference>
<dbReference type="GO" id="GO:0017171">
    <property type="term" value="F:serine hydrolase activity"/>
    <property type="evidence" value="ECO:0000318"/>
    <property type="project" value="GO_Central"/>
</dbReference>
<dbReference type="GO" id="GO:0046485">
    <property type="term" value="P:ether lipid metabolic process"/>
    <property type="evidence" value="ECO:0000250"/>
    <property type="project" value="UniProtKB"/>
</dbReference>
<dbReference type="GO" id="GO:0016042">
    <property type="term" value="P:lipid catabolic process"/>
    <property type="evidence" value="ECO:0007669"/>
    <property type="project" value="UniProtKB-KW"/>
</dbReference>
<dbReference type="Gene3D" id="3.40.50.1820">
    <property type="entry name" value="alpha/beta hydrolase"/>
    <property type="match status" value="1"/>
</dbReference>
<dbReference type="InterPro" id="IPR013094">
    <property type="entry name" value="AB_hydrolase_3"/>
</dbReference>
<dbReference type="InterPro" id="IPR029058">
    <property type="entry name" value="AB_hydrolase_fold"/>
</dbReference>
<dbReference type="InterPro" id="IPR017157">
    <property type="entry name" value="Arylacetamide_deacetylase"/>
</dbReference>
<dbReference type="InterPro" id="IPR050300">
    <property type="entry name" value="GDXG_lipolytic_enzyme"/>
</dbReference>
<dbReference type="InterPro" id="IPR033140">
    <property type="entry name" value="Lipase_GDXG_put_SER_AS"/>
</dbReference>
<dbReference type="PANTHER" id="PTHR48081">
    <property type="entry name" value="AB HYDROLASE SUPERFAMILY PROTEIN C4A8.06C"/>
    <property type="match status" value="1"/>
</dbReference>
<dbReference type="PANTHER" id="PTHR48081:SF29">
    <property type="entry name" value="NEUTRAL CHOLESTEROL ESTER HYDROLASE 1"/>
    <property type="match status" value="1"/>
</dbReference>
<dbReference type="Pfam" id="PF07859">
    <property type="entry name" value="Abhydrolase_3"/>
    <property type="match status" value="2"/>
</dbReference>
<dbReference type="PIRSF" id="PIRSF037251">
    <property type="entry name" value="Arylacetamide_deacetylase"/>
    <property type="match status" value="1"/>
</dbReference>
<dbReference type="SUPFAM" id="SSF53474">
    <property type="entry name" value="alpha/beta-Hydrolases"/>
    <property type="match status" value="1"/>
</dbReference>
<dbReference type="PROSITE" id="PS01174">
    <property type="entry name" value="LIPASE_GDXG_SER"/>
    <property type="match status" value="1"/>
</dbReference>
<feature type="chain" id="PRO_0000352850" description="Neutral cholesterol ester hydrolase 1">
    <location>
        <begin position="1"/>
        <end position="408"/>
    </location>
</feature>
<feature type="topological domain" description="Cytoplasmic" evidence="4">
    <location>
        <begin position="1"/>
        <end position="4"/>
    </location>
</feature>
<feature type="transmembrane region" description="Helical; Signal-anchor for type II membrane protein" evidence="4">
    <location>
        <begin position="5"/>
        <end position="25"/>
    </location>
</feature>
<feature type="topological domain" description="Lumenal" evidence="4">
    <location>
        <begin position="26"/>
        <end position="408"/>
    </location>
</feature>
<feature type="short sequence motif" description="Involved in the stabilization of the negatively charged intermediate by the formation of the oxyanion hole" evidence="1">
    <location>
        <begin position="113"/>
        <end position="115"/>
    </location>
</feature>
<feature type="active site" evidence="5">
    <location>
        <position position="191"/>
    </location>
</feature>
<feature type="active site" evidence="5">
    <location>
        <position position="348"/>
    </location>
</feature>
<feature type="active site" evidence="5">
    <location>
        <position position="378"/>
    </location>
</feature>
<feature type="glycosylation site" description="N-linked (GlcNAc...) asparagine" evidence="4">
    <location>
        <position position="270"/>
    </location>
</feature>
<feature type="glycosylation site" description="N-linked (GlcNAc...) asparagine" evidence="4">
    <location>
        <position position="287"/>
    </location>
</feature>
<feature type="glycosylation site" description="N-linked (GlcNAc...) asparagine" evidence="4">
    <location>
        <position position="389"/>
    </location>
</feature>
<gene>
    <name type="primary">NCEH1</name>
    <name type="synonym">AADACL1</name>
</gene>
<reference key="1">
    <citation type="submission" date="2006-05" db="EMBL/GenBank/DDBJ databases">
        <authorList>
            <consortium name="NIH - Mammalian Gene Collection (MGC) project"/>
        </authorList>
    </citation>
    <scope>NUCLEOTIDE SEQUENCE [LARGE SCALE MRNA]</scope>
    <source>
        <strain>Hereford</strain>
        <tissue>Thymus</tissue>
    </source>
</reference>
<accession>Q1JQE6</accession>
<keyword id="KW-1003">Cell membrane</keyword>
<keyword id="KW-0256">Endoplasmic reticulum</keyword>
<keyword id="KW-0325">Glycoprotein</keyword>
<keyword id="KW-0378">Hydrolase</keyword>
<keyword id="KW-0442">Lipid degradation</keyword>
<keyword id="KW-0443">Lipid metabolism</keyword>
<keyword id="KW-0472">Membrane</keyword>
<keyword id="KW-0492">Microsome</keyword>
<keyword id="KW-1185">Reference proteome</keyword>
<keyword id="KW-0735">Signal-anchor</keyword>
<keyword id="KW-0812">Transmembrane</keyword>
<keyword id="KW-1133">Transmembrane helix</keyword>
<sequence>MRSSCVLLTALLALAAYYIYIPLPSSVSDPWKLMLLDATFRSAQQVSNLIHFLGLSHHLLALNFIIVSFGKKSAWSSAQVKVTDTDFDGVEVRVFEGPPKPEEPLKRSIVYIHGGGWALASAKIRYYDELCTTMAEELNAVIVSIEYRLVPKVYFPEQIHDVVHATKYFLQPEVLHKYSVDPGRVGISGDSAGGNLAAALGQQFNQDTNLKNKLKVQALIYPVLQALDFNTPSYQQNMNTPILPRYVMVKYWVDYFNGNYDFVQAMIVNNHTSLDVDEASALRARLNWTSLLPTSITKNYKPVMQTTGNSRIVQEIPQLLDARSAPLIADQEVLQHLPKTYILTCEHDVLRDDGIMYAKRLESAGVEVTLDHFEDGFHGCMIFTSWPTNFSVGIRTRNSYIKWLDQNL</sequence>
<name>NCEH1_BOVIN</name>
<organism>
    <name type="scientific">Bos taurus</name>
    <name type="common">Bovine</name>
    <dbReference type="NCBI Taxonomy" id="9913"/>
    <lineage>
        <taxon>Eukaryota</taxon>
        <taxon>Metazoa</taxon>
        <taxon>Chordata</taxon>
        <taxon>Craniata</taxon>
        <taxon>Vertebrata</taxon>
        <taxon>Euteleostomi</taxon>
        <taxon>Mammalia</taxon>
        <taxon>Eutheria</taxon>
        <taxon>Laurasiatheria</taxon>
        <taxon>Artiodactyla</taxon>
        <taxon>Ruminantia</taxon>
        <taxon>Pecora</taxon>
        <taxon>Bovidae</taxon>
        <taxon>Bovinae</taxon>
        <taxon>Bos</taxon>
    </lineage>
</organism>
<protein>
    <recommendedName>
        <fullName>Neutral cholesterol ester hydrolase 1</fullName>
        <shortName>NCEH</shortName>
        <ecNumber evidence="3">3.1.1.-</ecNumber>
    </recommendedName>
    <alternativeName>
        <fullName evidence="3">Acetylalkylglycerol acetylhydrolase</fullName>
        <shortName evidence="2">2-acetyl MAGE hydrolase</shortName>
        <ecNumber evidence="3">3.1.1.71</ecNumber>
    </alternativeName>
    <alternativeName>
        <fullName>Arylacetamide deacetylase-like 1</fullName>
    </alternativeName>
</protein>